<reference key="1">
    <citation type="journal article" date="2003" name="Nat. Genet.">
        <title>Comparative analysis of the genome sequences of Bordetella pertussis, Bordetella parapertussis and Bordetella bronchiseptica.</title>
        <authorList>
            <person name="Parkhill J."/>
            <person name="Sebaihia M."/>
            <person name="Preston A."/>
            <person name="Murphy L.D."/>
            <person name="Thomson N.R."/>
            <person name="Harris D.E."/>
            <person name="Holden M.T.G."/>
            <person name="Churcher C.M."/>
            <person name="Bentley S.D."/>
            <person name="Mungall K.L."/>
            <person name="Cerdeno-Tarraga A.-M."/>
            <person name="Temple L."/>
            <person name="James K.D."/>
            <person name="Harris B."/>
            <person name="Quail M.A."/>
            <person name="Achtman M."/>
            <person name="Atkin R."/>
            <person name="Baker S."/>
            <person name="Basham D."/>
            <person name="Bason N."/>
            <person name="Cherevach I."/>
            <person name="Chillingworth T."/>
            <person name="Collins M."/>
            <person name="Cronin A."/>
            <person name="Davis P."/>
            <person name="Doggett J."/>
            <person name="Feltwell T."/>
            <person name="Goble A."/>
            <person name="Hamlin N."/>
            <person name="Hauser H."/>
            <person name="Holroyd S."/>
            <person name="Jagels K."/>
            <person name="Leather S."/>
            <person name="Moule S."/>
            <person name="Norberczak H."/>
            <person name="O'Neil S."/>
            <person name="Ormond D."/>
            <person name="Price C."/>
            <person name="Rabbinowitsch E."/>
            <person name="Rutter S."/>
            <person name="Sanders M."/>
            <person name="Saunders D."/>
            <person name="Seeger K."/>
            <person name="Sharp S."/>
            <person name="Simmonds M."/>
            <person name="Skelton J."/>
            <person name="Squares R."/>
            <person name="Squares S."/>
            <person name="Stevens K."/>
            <person name="Unwin L."/>
            <person name="Whitehead S."/>
            <person name="Barrell B.G."/>
            <person name="Maskell D.J."/>
        </authorList>
    </citation>
    <scope>NUCLEOTIDE SEQUENCE [LARGE SCALE GENOMIC DNA]</scope>
    <source>
        <strain>12822 / ATCC BAA-587 / NCTC 13253</strain>
    </source>
</reference>
<protein>
    <recommendedName>
        <fullName evidence="1">ATP synthase subunit b</fullName>
    </recommendedName>
    <alternativeName>
        <fullName evidence="1">ATP synthase F(0) sector subunit b</fullName>
    </alternativeName>
    <alternativeName>
        <fullName evidence="1">ATPase subunit I</fullName>
    </alternativeName>
    <alternativeName>
        <fullName evidence="1">F-type ATPase subunit b</fullName>
        <shortName evidence="1">F-ATPase subunit b</shortName>
    </alternativeName>
</protein>
<dbReference type="EMBL" id="BX640435">
    <property type="protein sequence ID" value="CAE39418.1"/>
    <property type="molecule type" value="Genomic_DNA"/>
</dbReference>
<dbReference type="RefSeq" id="WP_003815350.1">
    <property type="nucleotide sequence ID" value="NC_002928.3"/>
</dbReference>
<dbReference type="SMR" id="Q7W3A6"/>
<dbReference type="KEGG" id="bpa:BPP4139"/>
<dbReference type="HOGENOM" id="CLU_079215_4_5_4"/>
<dbReference type="Proteomes" id="UP000001421">
    <property type="component" value="Chromosome"/>
</dbReference>
<dbReference type="GO" id="GO:0005886">
    <property type="term" value="C:plasma membrane"/>
    <property type="evidence" value="ECO:0007669"/>
    <property type="project" value="UniProtKB-SubCell"/>
</dbReference>
<dbReference type="GO" id="GO:0045259">
    <property type="term" value="C:proton-transporting ATP synthase complex"/>
    <property type="evidence" value="ECO:0007669"/>
    <property type="project" value="UniProtKB-KW"/>
</dbReference>
<dbReference type="GO" id="GO:0046933">
    <property type="term" value="F:proton-transporting ATP synthase activity, rotational mechanism"/>
    <property type="evidence" value="ECO:0007669"/>
    <property type="project" value="UniProtKB-UniRule"/>
</dbReference>
<dbReference type="GO" id="GO:0046961">
    <property type="term" value="F:proton-transporting ATPase activity, rotational mechanism"/>
    <property type="evidence" value="ECO:0007669"/>
    <property type="project" value="TreeGrafter"/>
</dbReference>
<dbReference type="CDD" id="cd06503">
    <property type="entry name" value="ATP-synt_Fo_b"/>
    <property type="match status" value="1"/>
</dbReference>
<dbReference type="Gene3D" id="1.20.5.620">
    <property type="entry name" value="F1F0 ATP synthase subunit B, membrane domain"/>
    <property type="match status" value="1"/>
</dbReference>
<dbReference type="HAMAP" id="MF_01398">
    <property type="entry name" value="ATP_synth_b_bprime"/>
    <property type="match status" value="1"/>
</dbReference>
<dbReference type="InterPro" id="IPR028987">
    <property type="entry name" value="ATP_synth_B-like_membr_sf"/>
</dbReference>
<dbReference type="InterPro" id="IPR002146">
    <property type="entry name" value="ATP_synth_b/b'su_bac/chlpt"/>
</dbReference>
<dbReference type="InterPro" id="IPR005864">
    <property type="entry name" value="ATP_synth_F0_bsu_bac"/>
</dbReference>
<dbReference type="InterPro" id="IPR050059">
    <property type="entry name" value="ATP_synthase_B_chain"/>
</dbReference>
<dbReference type="NCBIfam" id="TIGR01144">
    <property type="entry name" value="ATP_synt_b"/>
    <property type="match status" value="1"/>
</dbReference>
<dbReference type="NCBIfam" id="NF004411">
    <property type="entry name" value="PRK05759.1-2"/>
    <property type="match status" value="1"/>
</dbReference>
<dbReference type="PANTHER" id="PTHR33445:SF1">
    <property type="entry name" value="ATP SYNTHASE SUBUNIT B"/>
    <property type="match status" value="1"/>
</dbReference>
<dbReference type="PANTHER" id="PTHR33445">
    <property type="entry name" value="ATP SYNTHASE SUBUNIT B', CHLOROPLASTIC"/>
    <property type="match status" value="1"/>
</dbReference>
<dbReference type="Pfam" id="PF00430">
    <property type="entry name" value="ATP-synt_B"/>
    <property type="match status" value="1"/>
</dbReference>
<dbReference type="SUPFAM" id="SSF81573">
    <property type="entry name" value="F1F0 ATP synthase subunit B, membrane domain"/>
    <property type="match status" value="1"/>
</dbReference>
<name>ATPF_BORPA</name>
<sequence length="156" mass="17261">MNLNATIFFQMLVFFVLGWFTMKFVWPPLTKAIDERRQKIADGLAAAEKGKADLAQAQARVSLIEASAKSETHARIIEAEKQAASVIEQARREAEAERARIVAQAAQDAAQEVQRAREALRDDVAALAVKGAEQILKREVDARAHAELLNQLKAQL</sequence>
<comment type="function">
    <text evidence="1">F(1)F(0) ATP synthase produces ATP from ADP in the presence of a proton or sodium gradient. F-type ATPases consist of two structural domains, F(1) containing the extramembraneous catalytic core and F(0) containing the membrane proton channel, linked together by a central stalk and a peripheral stalk. During catalysis, ATP synthesis in the catalytic domain of F(1) is coupled via a rotary mechanism of the central stalk subunits to proton translocation.</text>
</comment>
<comment type="function">
    <text evidence="1">Component of the F(0) channel, it forms part of the peripheral stalk, linking F(1) to F(0).</text>
</comment>
<comment type="subunit">
    <text evidence="1">F-type ATPases have 2 components, F(1) - the catalytic core - and F(0) - the membrane proton channel. F(1) has five subunits: alpha(3), beta(3), gamma(1), delta(1), epsilon(1). F(0) has three main subunits: a(1), b(2) and c(10-14). The alpha and beta chains form an alternating ring which encloses part of the gamma chain. F(1) is attached to F(0) by a central stalk formed by the gamma and epsilon chains, while a peripheral stalk is formed by the delta and b chains.</text>
</comment>
<comment type="subcellular location">
    <subcellularLocation>
        <location evidence="1">Cell inner membrane</location>
        <topology evidence="1">Single-pass membrane protein</topology>
    </subcellularLocation>
</comment>
<comment type="similarity">
    <text evidence="1">Belongs to the ATPase B chain family.</text>
</comment>
<accession>Q7W3A6</accession>
<keyword id="KW-0066">ATP synthesis</keyword>
<keyword id="KW-0997">Cell inner membrane</keyword>
<keyword id="KW-1003">Cell membrane</keyword>
<keyword id="KW-0138">CF(0)</keyword>
<keyword id="KW-0375">Hydrogen ion transport</keyword>
<keyword id="KW-0406">Ion transport</keyword>
<keyword id="KW-0472">Membrane</keyword>
<keyword id="KW-0812">Transmembrane</keyword>
<keyword id="KW-1133">Transmembrane helix</keyword>
<keyword id="KW-0813">Transport</keyword>
<feature type="chain" id="PRO_0000368358" description="ATP synthase subunit b">
    <location>
        <begin position="1"/>
        <end position="156"/>
    </location>
</feature>
<feature type="transmembrane region" description="Helical" evidence="1">
    <location>
        <begin position="7"/>
        <end position="27"/>
    </location>
</feature>
<evidence type="ECO:0000255" key="1">
    <source>
        <dbReference type="HAMAP-Rule" id="MF_01398"/>
    </source>
</evidence>
<gene>
    <name evidence="1" type="primary">atpF</name>
    <name type="ordered locus">BPP4139</name>
</gene>
<organism>
    <name type="scientific">Bordetella parapertussis (strain 12822 / ATCC BAA-587 / NCTC 13253)</name>
    <dbReference type="NCBI Taxonomy" id="257311"/>
    <lineage>
        <taxon>Bacteria</taxon>
        <taxon>Pseudomonadati</taxon>
        <taxon>Pseudomonadota</taxon>
        <taxon>Betaproteobacteria</taxon>
        <taxon>Burkholderiales</taxon>
        <taxon>Alcaligenaceae</taxon>
        <taxon>Bordetella</taxon>
    </lineage>
</organism>
<proteinExistence type="inferred from homology"/>